<accession>Q7N3A6</accession>
<evidence type="ECO:0000255" key="1">
    <source>
        <dbReference type="HAMAP-Rule" id="MF_01708"/>
    </source>
</evidence>
<protein>
    <recommendedName>
        <fullName evidence="1">Lipoprotein-releasing system ATP-binding protein LolD</fullName>
        <ecNumber evidence="1">7.6.2.-</ecNumber>
    </recommendedName>
</protein>
<dbReference type="EC" id="7.6.2.-" evidence="1"/>
<dbReference type="EMBL" id="BX571868">
    <property type="protein sequence ID" value="CAE15187.1"/>
    <property type="molecule type" value="Genomic_DNA"/>
</dbReference>
<dbReference type="RefSeq" id="WP_011147033.1">
    <property type="nucleotide sequence ID" value="NC_005126.1"/>
</dbReference>
<dbReference type="SMR" id="Q7N3A6"/>
<dbReference type="STRING" id="243265.plu2813"/>
<dbReference type="GeneID" id="48849076"/>
<dbReference type="KEGG" id="plu:plu2813"/>
<dbReference type="eggNOG" id="COG1136">
    <property type="taxonomic scope" value="Bacteria"/>
</dbReference>
<dbReference type="HOGENOM" id="CLU_000604_1_22_6"/>
<dbReference type="OrthoDB" id="9801477at2"/>
<dbReference type="Proteomes" id="UP000002514">
    <property type="component" value="Chromosome"/>
</dbReference>
<dbReference type="GO" id="GO:0005886">
    <property type="term" value="C:plasma membrane"/>
    <property type="evidence" value="ECO:0007669"/>
    <property type="project" value="UniProtKB-SubCell"/>
</dbReference>
<dbReference type="GO" id="GO:0005524">
    <property type="term" value="F:ATP binding"/>
    <property type="evidence" value="ECO:0007669"/>
    <property type="project" value="UniProtKB-KW"/>
</dbReference>
<dbReference type="GO" id="GO:0016887">
    <property type="term" value="F:ATP hydrolysis activity"/>
    <property type="evidence" value="ECO:0007669"/>
    <property type="project" value="InterPro"/>
</dbReference>
<dbReference type="GO" id="GO:0022857">
    <property type="term" value="F:transmembrane transporter activity"/>
    <property type="evidence" value="ECO:0007669"/>
    <property type="project" value="TreeGrafter"/>
</dbReference>
<dbReference type="GO" id="GO:0044874">
    <property type="term" value="P:lipoprotein localization to outer membrane"/>
    <property type="evidence" value="ECO:0007669"/>
    <property type="project" value="TreeGrafter"/>
</dbReference>
<dbReference type="GO" id="GO:0089705">
    <property type="term" value="P:protein localization to outer membrane"/>
    <property type="evidence" value="ECO:0007669"/>
    <property type="project" value="TreeGrafter"/>
</dbReference>
<dbReference type="CDD" id="cd03255">
    <property type="entry name" value="ABC_MJ0796_LolCDE_FtsE"/>
    <property type="match status" value="1"/>
</dbReference>
<dbReference type="FunFam" id="3.40.50.300:FF:000230">
    <property type="entry name" value="Lipoprotein-releasing system ATP-binding protein LolD"/>
    <property type="match status" value="1"/>
</dbReference>
<dbReference type="Gene3D" id="3.40.50.300">
    <property type="entry name" value="P-loop containing nucleotide triphosphate hydrolases"/>
    <property type="match status" value="1"/>
</dbReference>
<dbReference type="InterPro" id="IPR003593">
    <property type="entry name" value="AAA+_ATPase"/>
</dbReference>
<dbReference type="InterPro" id="IPR003439">
    <property type="entry name" value="ABC_transporter-like_ATP-bd"/>
</dbReference>
<dbReference type="InterPro" id="IPR017871">
    <property type="entry name" value="ABC_transporter-like_CS"/>
</dbReference>
<dbReference type="InterPro" id="IPR015854">
    <property type="entry name" value="ABC_transpr_LolD-like"/>
</dbReference>
<dbReference type="InterPro" id="IPR011924">
    <property type="entry name" value="LolD_lipo_ATP-bd"/>
</dbReference>
<dbReference type="InterPro" id="IPR017911">
    <property type="entry name" value="MacB-like_ATP-bd"/>
</dbReference>
<dbReference type="InterPro" id="IPR027417">
    <property type="entry name" value="P-loop_NTPase"/>
</dbReference>
<dbReference type="NCBIfam" id="TIGR02211">
    <property type="entry name" value="LolD_lipo_ex"/>
    <property type="match status" value="1"/>
</dbReference>
<dbReference type="NCBIfam" id="NF008639">
    <property type="entry name" value="PRK11629.1"/>
    <property type="match status" value="1"/>
</dbReference>
<dbReference type="PANTHER" id="PTHR24220">
    <property type="entry name" value="IMPORT ATP-BINDING PROTEIN"/>
    <property type="match status" value="1"/>
</dbReference>
<dbReference type="PANTHER" id="PTHR24220:SF689">
    <property type="entry name" value="LIPOPROTEIN-RELEASING SYSTEM ATP-BINDING PROTEIN LOLD"/>
    <property type="match status" value="1"/>
</dbReference>
<dbReference type="Pfam" id="PF00005">
    <property type="entry name" value="ABC_tran"/>
    <property type="match status" value="1"/>
</dbReference>
<dbReference type="SMART" id="SM00382">
    <property type="entry name" value="AAA"/>
    <property type="match status" value="1"/>
</dbReference>
<dbReference type="SUPFAM" id="SSF52540">
    <property type="entry name" value="P-loop containing nucleoside triphosphate hydrolases"/>
    <property type="match status" value="1"/>
</dbReference>
<dbReference type="PROSITE" id="PS00211">
    <property type="entry name" value="ABC_TRANSPORTER_1"/>
    <property type="match status" value="1"/>
</dbReference>
<dbReference type="PROSITE" id="PS50893">
    <property type="entry name" value="ABC_TRANSPORTER_2"/>
    <property type="match status" value="1"/>
</dbReference>
<dbReference type="PROSITE" id="PS51244">
    <property type="entry name" value="LOLD"/>
    <property type="match status" value="1"/>
</dbReference>
<sequence length="234" mass="25535">MNNQPLLLCNNLCKKYQEGQVLTEVLKNVTFAINQSEMMAIVGSSGSGKSTLLHLLGGLDTPTSGEVLFKGHSLNKMSSGARAELRNHELGFIYQFHHLLPDFNAVENVAMPLLIGGKNRGQAQKKAFEMLAAVGLEKRAHHRPSELSGGERQRVAIARALVNEPSLVLADEPTGNLDLRNADSIFALLGELNRQQGTAFLVVTHDLNLAGRLNRQVEMRDGYLQDELTVTGAL</sequence>
<feature type="chain" id="PRO_0000092446" description="Lipoprotein-releasing system ATP-binding protein LolD">
    <location>
        <begin position="1"/>
        <end position="234"/>
    </location>
</feature>
<feature type="domain" description="ABC transporter" evidence="1">
    <location>
        <begin position="7"/>
        <end position="234"/>
    </location>
</feature>
<feature type="binding site" evidence="1">
    <location>
        <begin position="43"/>
        <end position="50"/>
    </location>
    <ligand>
        <name>ATP</name>
        <dbReference type="ChEBI" id="CHEBI:30616"/>
    </ligand>
</feature>
<proteinExistence type="inferred from homology"/>
<comment type="function">
    <text evidence="1">Part of the ABC transporter complex LolCDE involved in the translocation of mature outer membrane-directed lipoproteins, from the inner membrane to the periplasmic chaperone, LolA. Responsible for the formation of the LolA-lipoprotein complex in an ATP-dependent manner.</text>
</comment>
<comment type="subunit">
    <text evidence="1">The complex is composed of two ATP-binding proteins (LolD) and two transmembrane proteins (LolC and LolE).</text>
</comment>
<comment type="subcellular location">
    <subcellularLocation>
        <location evidence="1">Cell inner membrane</location>
        <topology evidence="1">Peripheral membrane protein</topology>
    </subcellularLocation>
</comment>
<comment type="similarity">
    <text evidence="1">Belongs to the ABC transporter superfamily. Lipoprotein translocase (TC 3.A.1.125) family.</text>
</comment>
<name>LOLD_PHOLL</name>
<reference key="1">
    <citation type="journal article" date="2003" name="Nat. Biotechnol.">
        <title>The genome sequence of the entomopathogenic bacterium Photorhabdus luminescens.</title>
        <authorList>
            <person name="Duchaud E."/>
            <person name="Rusniok C."/>
            <person name="Frangeul L."/>
            <person name="Buchrieser C."/>
            <person name="Givaudan A."/>
            <person name="Taourit S."/>
            <person name="Bocs S."/>
            <person name="Boursaux-Eude C."/>
            <person name="Chandler M."/>
            <person name="Charles J.-F."/>
            <person name="Dassa E."/>
            <person name="Derose R."/>
            <person name="Derzelle S."/>
            <person name="Freyssinet G."/>
            <person name="Gaudriault S."/>
            <person name="Medigue C."/>
            <person name="Lanois A."/>
            <person name="Powell K."/>
            <person name="Siguier P."/>
            <person name="Vincent R."/>
            <person name="Wingate V."/>
            <person name="Zouine M."/>
            <person name="Glaser P."/>
            <person name="Boemare N."/>
            <person name="Danchin A."/>
            <person name="Kunst F."/>
        </authorList>
    </citation>
    <scope>NUCLEOTIDE SEQUENCE [LARGE SCALE GENOMIC DNA]</scope>
    <source>
        <strain>DSM 15139 / CIP 105565 / TT01</strain>
    </source>
</reference>
<gene>
    <name evidence="1" type="primary">lolD</name>
    <name type="ordered locus">plu2813</name>
</gene>
<keyword id="KW-0067">ATP-binding</keyword>
<keyword id="KW-0997">Cell inner membrane</keyword>
<keyword id="KW-1003">Cell membrane</keyword>
<keyword id="KW-0472">Membrane</keyword>
<keyword id="KW-0547">Nucleotide-binding</keyword>
<keyword id="KW-1185">Reference proteome</keyword>
<keyword id="KW-1278">Translocase</keyword>
<keyword id="KW-0813">Transport</keyword>
<organism>
    <name type="scientific">Photorhabdus laumondii subsp. laumondii (strain DSM 15139 / CIP 105565 / TT01)</name>
    <name type="common">Photorhabdus luminescens subsp. laumondii</name>
    <dbReference type="NCBI Taxonomy" id="243265"/>
    <lineage>
        <taxon>Bacteria</taxon>
        <taxon>Pseudomonadati</taxon>
        <taxon>Pseudomonadota</taxon>
        <taxon>Gammaproteobacteria</taxon>
        <taxon>Enterobacterales</taxon>
        <taxon>Morganellaceae</taxon>
        <taxon>Photorhabdus</taxon>
    </lineage>
</organism>